<name>ACP_DESHY</name>
<keyword id="KW-0963">Cytoplasm</keyword>
<keyword id="KW-0275">Fatty acid biosynthesis</keyword>
<keyword id="KW-0276">Fatty acid metabolism</keyword>
<keyword id="KW-0444">Lipid biosynthesis</keyword>
<keyword id="KW-0443">Lipid metabolism</keyword>
<keyword id="KW-0596">Phosphopantetheine</keyword>
<keyword id="KW-0597">Phosphoprotein</keyword>
<keyword id="KW-1185">Reference proteome</keyword>
<evidence type="ECO:0000255" key="1">
    <source>
        <dbReference type="HAMAP-Rule" id="MF_01217"/>
    </source>
</evidence>
<evidence type="ECO:0000255" key="2">
    <source>
        <dbReference type="PROSITE-ProRule" id="PRU00258"/>
    </source>
</evidence>
<protein>
    <recommendedName>
        <fullName evidence="1">Acyl carrier protein</fullName>
        <shortName evidence="1">ACP</shortName>
    </recommendedName>
</protein>
<gene>
    <name evidence="1" type="primary">acpP</name>
    <name type="ordered locus">DSY2659</name>
</gene>
<organism>
    <name type="scientific">Desulfitobacterium hafniense (strain Y51)</name>
    <dbReference type="NCBI Taxonomy" id="138119"/>
    <lineage>
        <taxon>Bacteria</taxon>
        <taxon>Bacillati</taxon>
        <taxon>Bacillota</taxon>
        <taxon>Clostridia</taxon>
        <taxon>Eubacteriales</taxon>
        <taxon>Desulfitobacteriaceae</taxon>
        <taxon>Desulfitobacterium</taxon>
    </lineage>
</organism>
<comment type="function">
    <text evidence="1">Carrier of the growing fatty acid chain in fatty acid biosynthesis.</text>
</comment>
<comment type="pathway">
    <text evidence="1">Lipid metabolism; fatty acid biosynthesis.</text>
</comment>
<comment type="subcellular location">
    <subcellularLocation>
        <location evidence="1">Cytoplasm</location>
    </subcellularLocation>
</comment>
<comment type="PTM">
    <text evidence="1">4'-phosphopantetheine is transferred from CoA to a specific serine of apo-ACP by AcpS. This modification is essential for activity because fatty acids are bound in thioester linkage to the sulfhydryl of the prosthetic group.</text>
</comment>
<comment type="similarity">
    <text evidence="1">Belongs to the acyl carrier protein (ACP) family.</text>
</comment>
<accession>Q24U44</accession>
<proteinExistence type="inferred from homology"/>
<reference key="1">
    <citation type="journal article" date="2006" name="J. Bacteriol.">
        <title>Complete genome sequence of the dehalorespiring bacterium Desulfitobacterium hafniense Y51 and comparison with Dehalococcoides ethenogenes 195.</title>
        <authorList>
            <person name="Nonaka H."/>
            <person name="Keresztes G."/>
            <person name="Shinoda Y."/>
            <person name="Ikenaga Y."/>
            <person name="Abe M."/>
            <person name="Naito K."/>
            <person name="Inatomi K."/>
            <person name="Furukawa K."/>
            <person name="Inui M."/>
            <person name="Yukawa H."/>
        </authorList>
    </citation>
    <scope>NUCLEOTIDE SEQUENCE [LARGE SCALE GENOMIC DNA]</scope>
    <source>
        <strain>Y51</strain>
    </source>
</reference>
<sequence length="75" mass="8461">MSVFDKVKSIVVDQLGVEEDEITLETTFADLNADSLDIVELIMALEEEFDLDIPDEDAEKIRNVGDAVNYIKENQ</sequence>
<feature type="chain" id="PRO_1000066601" description="Acyl carrier protein">
    <location>
        <begin position="1"/>
        <end position="75"/>
    </location>
</feature>
<feature type="domain" description="Carrier" evidence="2">
    <location>
        <begin position="1"/>
        <end position="75"/>
    </location>
</feature>
<feature type="modified residue" description="O-(pantetheine 4'-phosphoryl)serine" evidence="2">
    <location>
        <position position="35"/>
    </location>
</feature>
<dbReference type="EMBL" id="AP008230">
    <property type="protein sequence ID" value="BAE84448.1"/>
    <property type="molecule type" value="Genomic_DNA"/>
</dbReference>
<dbReference type="RefSeq" id="WP_005813415.1">
    <property type="nucleotide sequence ID" value="NC_007907.1"/>
</dbReference>
<dbReference type="SMR" id="Q24U44"/>
<dbReference type="STRING" id="138119.DSY2659"/>
<dbReference type="KEGG" id="dsy:DSY2659"/>
<dbReference type="eggNOG" id="COG0236">
    <property type="taxonomic scope" value="Bacteria"/>
</dbReference>
<dbReference type="HOGENOM" id="CLU_108696_5_1_9"/>
<dbReference type="UniPathway" id="UPA00094"/>
<dbReference type="Proteomes" id="UP000001946">
    <property type="component" value="Chromosome"/>
</dbReference>
<dbReference type="GO" id="GO:0005829">
    <property type="term" value="C:cytosol"/>
    <property type="evidence" value="ECO:0007669"/>
    <property type="project" value="TreeGrafter"/>
</dbReference>
<dbReference type="GO" id="GO:0016020">
    <property type="term" value="C:membrane"/>
    <property type="evidence" value="ECO:0007669"/>
    <property type="project" value="GOC"/>
</dbReference>
<dbReference type="GO" id="GO:0000035">
    <property type="term" value="F:acyl binding"/>
    <property type="evidence" value="ECO:0007669"/>
    <property type="project" value="TreeGrafter"/>
</dbReference>
<dbReference type="GO" id="GO:0000036">
    <property type="term" value="F:acyl carrier activity"/>
    <property type="evidence" value="ECO:0007669"/>
    <property type="project" value="UniProtKB-UniRule"/>
</dbReference>
<dbReference type="GO" id="GO:0031177">
    <property type="term" value="F:phosphopantetheine binding"/>
    <property type="evidence" value="ECO:0007669"/>
    <property type="project" value="InterPro"/>
</dbReference>
<dbReference type="GO" id="GO:0009245">
    <property type="term" value="P:lipid A biosynthetic process"/>
    <property type="evidence" value="ECO:0007669"/>
    <property type="project" value="TreeGrafter"/>
</dbReference>
<dbReference type="Gene3D" id="1.10.1200.10">
    <property type="entry name" value="ACP-like"/>
    <property type="match status" value="1"/>
</dbReference>
<dbReference type="HAMAP" id="MF_01217">
    <property type="entry name" value="Acyl_carrier"/>
    <property type="match status" value="1"/>
</dbReference>
<dbReference type="InterPro" id="IPR003231">
    <property type="entry name" value="ACP"/>
</dbReference>
<dbReference type="InterPro" id="IPR036736">
    <property type="entry name" value="ACP-like_sf"/>
</dbReference>
<dbReference type="InterPro" id="IPR020806">
    <property type="entry name" value="PKS_PP-bd"/>
</dbReference>
<dbReference type="InterPro" id="IPR009081">
    <property type="entry name" value="PP-bd_ACP"/>
</dbReference>
<dbReference type="InterPro" id="IPR006162">
    <property type="entry name" value="Ppantetheine_attach_site"/>
</dbReference>
<dbReference type="NCBIfam" id="TIGR00517">
    <property type="entry name" value="acyl_carrier"/>
    <property type="match status" value="1"/>
</dbReference>
<dbReference type="NCBIfam" id="NF002148">
    <property type="entry name" value="PRK00982.1-2"/>
    <property type="match status" value="1"/>
</dbReference>
<dbReference type="NCBIfam" id="NF002150">
    <property type="entry name" value="PRK00982.1-4"/>
    <property type="match status" value="1"/>
</dbReference>
<dbReference type="NCBIfam" id="NF002151">
    <property type="entry name" value="PRK00982.1-5"/>
    <property type="match status" value="1"/>
</dbReference>
<dbReference type="PANTHER" id="PTHR20863">
    <property type="entry name" value="ACYL CARRIER PROTEIN"/>
    <property type="match status" value="1"/>
</dbReference>
<dbReference type="PANTHER" id="PTHR20863:SF76">
    <property type="entry name" value="CARRIER DOMAIN-CONTAINING PROTEIN"/>
    <property type="match status" value="1"/>
</dbReference>
<dbReference type="Pfam" id="PF00550">
    <property type="entry name" value="PP-binding"/>
    <property type="match status" value="1"/>
</dbReference>
<dbReference type="SMART" id="SM00823">
    <property type="entry name" value="PKS_PP"/>
    <property type="match status" value="1"/>
</dbReference>
<dbReference type="SUPFAM" id="SSF47336">
    <property type="entry name" value="ACP-like"/>
    <property type="match status" value="1"/>
</dbReference>
<dbReference type="PROSITE" id="PS50075">
    <property type="entry name" value="CARRIER"/>
    <property type="match status" value="1"/>
</dbReference>
<dbReference type="PROSITE" id="PS00012">
    <property type="entry name" value="PHOSPHOPANTETHEINE"/>
    <property type="match status" value="1"/>
</dbReference>